<gene>
    <name type="primary">tetQ</name>
    <name type="synonym">tet(Q)</name>
</gene>
<evidence type="ECO:0000250" key="1"/>
<evidence type="ECO:0000255" key="2">
    <source>
        <dbReference type="PROSITE-ProRule" id="PRU01059"/>
    </source>
</evidence>
<evidence type="ECO:0000305" key="3"/>
<feature type="chain" id="PRO_0000091512" description="Tetracycline resistance protein TetQ">
    <location>
        <begin position="1"/>
        <end position="654"/>
    </location>
</feature>
<feature type="domain" description="tr-type G" evidence="2">
    <location>
        <begin position="1"/>
        <end position="244"/>
    </location>
</feature>
<feature type="binding site" evidence="1">
    <location>
        <begin position="10"/>
        <end position="17"/>
    </location>
    <ligand>
        <name>GTP</name>
        <dbReference type="ChEBI" id="CHEBI:37565"/>
    </ligand>
</feature>
<feature type="binding site" evidence="1">
    <location>
        <begin position="74"/>
        <end position="78"/>
    </location>
    <ligand>
        <name>GTP</name>
        <dbReference type="ChEBI" id="CHEBI:37565"/>
    </ligand>
</feature>
<feature type="binding site" evidence="1">
    <location>
        <begin position="128"/>
        <end position="131"/>
    </location>
    <ligand>
        <name>GTP</name>
        <dbReference type="ChEBI" id="CHEBI:37565"/>
    </ligand>
</feature>
<dbReference type="EMBL" id="U73497">
    <property type="protein sequence ID" value="AAB51122.1"/>
    <property type="status" value="ALT_INIT"/>
    <property type="molecule type" value="Genomic_DNA"/>
</dbReference>
<dbReference type="RefSeq" id="WP_063856408.1">
    <property type="nucleotide sequence ID" value="NG_048271.1"/>
</dbReference>
<dbReference type="SMR" id="O05197"/>
<dbReference type="GO" id="GO:0005525">
    <property type="term" value="F:GTP binding"/>
    <property type="evidence" value="ECO:0007669"/>
    <property type="project" value="UniProtKB-KW"/>
</dbReference>
<dbReference type="GO" id="GO:0003924">
    <property type="term" value="F:GTPase activity"/>
    <property type="evidence" value="ECO:0007669"/>
    <property type="project" value="InterPro"/>
</dbReference>
<dbReference type="GO" id="GO:0046677">
    <property type="term" value="P:response to antibiotic"/>
    <property type="evidence" value="ECO:0007669"/>
    <property type="project" value="UniProtKB-KW"/>
</dbReference>
<dbReference type="GO" id="GO:0032790">
    <property type="term" value="P:ribosome disassembly"/>
    <property type="evidence" value="ECO:0007669"/>
    <property type="project" value="TreeGrafter"/>
</dbReference>
<dbReference type="GO" id="GO:0006412">
    <property type="term" value="P:translation"/>
    <property type="evidence" value="ECO:0007669"/>
    <property type="project" value="UniProtKB-KW"/>
</dbReference>
<dbReference type="CDD" id="cd03711">
    <property type="entry name" value="Tet_C"/>
    <property type="match status" value="1"/>
</dbReference>
<dbReference type="CDD" id="cd03690">
    <property type="entry name" value="Tet_II"/>
    <property type="match status" value="1"/>
</dbReference>
<dbReference type="CDD" id="cd16258">
    <property type="entry name" value="Tet_III"/>
    <property type="match status" value="1"/>
</dbReference>
<dbReference type="CDD" id="cd01684">
    <property type="entry name" value="Tet_like_IV"/>
    <property type="match status" value="1"/>
</dbReference>
<dbReference type="CDD" id="cd04168">
    <property type="entry name" value="TetM_like"/>
    <property type="match status" value="1"/>
</dbReference>
<dbReference type="Gene3D" id="3.30.230.10">
    <property type="match status" value="1"/>
</dbReference>
<dbReference type="Gene3D" id="3.30.70.240">
    <property type="match status" value="1"/>
</dbReference>
<dbReference type="Gene3D" id="3.30.70.870">
    <property type="entry name" value="Elongation Factor G (Translational Gtpase), domain 3"/>
    <property type="match status" value="1"/>
</dbReference>
<dbReference type="Gene3D" id="3.40.50.300">
    <property type="entry name" value="P-loop containing nucleotide triphosphate hydrolases"/>
    <property type="match status" value="1"/>
</dbReference>
<dbReference type="Gene3D" id="2.40.30.10">
    <property type="entry name" value="Translation factors"/>
    <property type="match status" value="1"/>
</dbReference>
<dbReference type="InterPro" id="IPR053905">
    <property type="entry name" value="EF-G-like_DII"/>
</dbReference>
<dbReference type="InterPro" id="IPR041095">
    <property type="entry name" value="EFG_II"/>
</dbReference>
<dbReference type="InterPro" id="IPR035647">
    <property type="entry name" value="EFG_III/V"/>
</dbReference>
<dbReference type="InterPro" id="IPR000640">
    <property type="entry name" value="EFG_V-like"/>
</dbReference>
<dbReference type="InterPro" id="IPR031157">
    <property type="entry name" value="G_TR_CS"/>
</dbReference>
<dbReference type="InterPro" id="IPR027417">
    <property type="entry name" value="P-loop_NTPase"/>
</dbReference>
<dbReference type="InterPro" id="IPR020568">
    <property type="entry name" value="Ribosomal_Su5_D2-typ_SF"/>
</dbReference>
<dbReference type="InterPro" id="IPR014721">
    <property type="entry name" value="Ribsml_uS5_D2-typ_fold_subgr"/>
</dbReference>
<dbReference type="InterPro" id="IPR005225">
    <property type="entry name" value="Small_GTP-bd"/>
</dbReference>
<dbReference type="InterPro" id="IPR000795">
    <property type="entry name" value="T_Tr_GTP-bd_dom"/>
</dbReference>
<dbReference type="InterPro" id="IPR035650">
    <property type="entry name" value="Tet_C"/>
</dbReference>
<dbReference type="InterPro" id="IPR009000">
    <property type="entry name" value="Transl_B-barrel_sf"/>
</dbReference>
<dbReference type="InterPro" id="IPR005517">
    <property type="entry name" value="Transl_elong_EFG/EF2_IV"/>
</dbReference>
<dbReference type="NCBIfam" id="TIGR00231">
    <property type="entry name" value="small_GTP"/>
    <property type="match status" value="1"/>
</dbReference>
<dbReference type="NCBIfam" id="NF012153">
    <property type="entry name" value="tet_protect"/>
    <property type="match status" value="1"/>
</dbReference>
<dbReference type="NCBIfam" id="NF012154">
    <property type="entry name" value="tet_protect_Q"/>
    <property type="match status" value="1"/>
</dbReference>
<dbReference type="PANTHER" id="PTHR43261:SF1">
    <property type="entry name" value="RIBOSOME-RELEASING FACTOR 2, MITOCHONDRIAL"/>
    <property type="match status" value="1"/>
</dbReference>
<dbReference type="PANTHER" id="PTHR43261">
    <property type="entry name" value="TRANSLATION ELONGATION FACTOR G-RELATED"/>
    <property type="match status" value="1"/>
</dbReference>
<dbReference type="Pfam" id="PF22042">
    <property type="entry name" value="EF-G_D2"/>
    <property type="match status" value="1"/>
</dbReference>
<dbReference type="Pfam" id="PF00679">
    <property type="entry name" value="EFG_C"/>
    <property type="match status" value="1"/>
</dbReference>
<dbReference type="Pfam" id="PF14492">
    <property type="entry name" value="EFG_III"/>
    <property type="match status" value="1"/>
</dbReference>
<dbReference type="Pfam" id="PF03764">
    <property type="entry name" value="EFG_IV"/>
    <property type="match status" value="1"/>
</dbReference>
<dbReference type="Pfam" id="PF00009">
    <property type="entry name" value="GTP_EFTU"/>
    <property type="match status" value="1"/>
</dbReference>
<dbReference type="PRINTS" id="PR00315">
    <property type="entry name" value="ELONGATNFCT"/>
</dbReference>
<dbReference type="PRINTS" id="PR01037">
    <property type="entry name" value="TCRTETOQM"/>
</dbReference>
<dbReference type="SMART" id="SM00838">
    <property type="entry name" value="EFG_C"/>
    <property type="match status" value="1"/>
</dbReference>
<dbReference type="SMART" id="SM00889">
    <property type="entry name" value="EFG_IV"/>
    <property type="match status" value="1"/>
</dbReference>
<dbReference type="SUPFAM" id="SSF54980">
    <property type="entry name" value="EF-G C-terminal domain-like"/>
    <property type="match status" value="2"/>
</dbReference>
<dbReference type="SUPFAM" id="SSF52540">
    <property type="entry name" value="P-loop containing nucleoside triphosphate hydrolases"/>
    <property type="match status" value="1"/>
</dbReference>
<dbReference type="SUPFAM" id="SSF54211">
    <property type="entry name" value="Ribosomal protein S5 domain 2-like"/>
    <property type="match status" value="1"/>
</dbReference>
<dbReference type="SUPFAM" id="SSF50447">
    <property type="entry name" value="Translation proteins"/>
    <property type="match status" value="1"/>
</dbReference>
<dbReference type="PROSITE" id="PS00301">
    <property type="entry name" value="G_TR_1"/>
    <property type="match status" value="1"/>
</dbReference>
<dbReference type="PROSITE" id="PS51722">
    <property type="entry name" value="G_TR_2"/>
    <property type="match status" value="1"/>
</dbReference>
<organism>
    <name type="scientific">Prevotella intermedia</name>
    <dbReference type="NCBI Taxonomy" id="28131"/>
    <lineage>
        <taxon>Bacteria</taxon>
        <taxon>Pseudomonadati</taxon>
        <taxon>Bacteroidota</taxon>
        <taxon>Bacteroidia</taxon>
        <taxon>Bacteroidales</taxon>
        <taxon>Prevotellaceae</taxon>
        <taxon>Prevotella</taxon>
    </lineage>
</organism>
<keyword id="KW-0046">Antibiotic resistance</keyword>
<keyword id="KW-0342">GTP-binding</keyword>
<keyword id="KW-0547">Nucleotide-binding</keyword>
<keyword id="KW-0648">Protein biosynthesis</keyword>
<comment type="function">
    <text>Abolishes the inhibitory effect of tetracyclin on protein synthesis by a non-covalent modification of the ribosomes.</text>
</comment>
<comment type="similarity">
    <text evidence="2">Belongs to the TRAFAC class translation factor GTPase superfamily. Classic translation factor GTPase family. TetM/TetO subfamily.</text>
</comment>
<comment type="sequence caution" evidence="3">
    <conflict type="erroneous initiation">
        <sequence resource="EMBL-CDS" id="AAB51122"/>
    </conflict>
</comment>
<sequence>MNIINLGILAHIDAGKTSVTENLLFASGATEKCGRVDNGDTITDSMDIEKRRGITVRASTTSIIWNGVKCNIIDTPGHMDFIAEVERTFKMLDGAVLILSAKEGIQAQTKLLFNTLQKLQIPTIIFINKIDRDGVNLERLYLDIKTNLSQDVLFMQTVVDGLVYPICSQTYIKEEYKEFVCNHDDNILERYLADSEISPADYWNTIIDLVAKAKVYPVLHGSAMFNIGINELLDAISSFILPPESVSNRLSAYLYKIEHDPKGHKRSFLKIIDGSLRLRDIVRINDSEKFIKIKNLKTIYQGRKINVDEVGANDIAIVEDMEDFRIGDYLGTKPCLIQGLSHQHPALKSSVRPDRSEERSKVISALNTLWIEDPSLSFSINSYSDELEISLYGLTQKEIIQTLLEERFSVKVHFDEIKTIYKERPVKKVNKIIQIEVPPNPYWATIGLTLEPLPLGTGLQIESDISYGYLNHSFQNAVFEGIRMSCQSGLHGWEVTDLKVTFTQAEYYSPVSTPADFRQLTPYVFRLALQQSGVDILEPMLYFELQIPQAASSKAITDLQKMMSEIEDISCNNEWCHIKGKVPYNTSKDYASEVSSYTKGLGVFMVKPCGYQITKGDYSDNIRMNEKDKILFMFQKSNVIKIMERSGNFYKAIQ</sequence>
<reference key="1">
    <citation type="submission" date="1996-10" db="EMBL/GenBank/DDBJ databases">
        <authorList>
            <person name="Bueno L.B."/>
            <person name="Presnail J.K."/>
            <person name="Walker C.B."/>
        </authorList>
    </citation>
    <scope>NUCLEOTIDE SEQUENCE [GENOMIC DNA]</scope>
    <source>
        <strain>PDRC-11</strain>
    </source>
</reference>
<accession>O05197</accession>
<protein>
    <recommendedName>
        <fullName>Tetracycline resistance protein TetQ</fullName>
        <shortName>Tet(Q)</shortName>
    </recommendedName>
</protein>
<name>TETQ_PREIN</name>
<proteinExistence type="inferred from homology"/>